<proteinExistence type="inferred from homology"/>
<name>RS3_THEVO</name>
<accession>Q97BX1</accession>
<sequence>MKERKFVNEAVKRLLVYEYLVKETENAGFGKMSMKRTPFGTNITLYVNRPGLVIGRRGSKVQQMTETLEKKYAIETPQIEVKDVKDPDLNPSVIAKKIALSLEKGWSYRKAGNTSLKRTIDAGARGVLIKISGKISGERARYQKFIYGNVKYSGEPGSKGMLVGFSTAKLKVGILGVTVKILNPEYKLPDVFSISNLAGGENVGTESETDKADEQGREAANTEES</sequence>
<reference key="1">
    <citation type="journal article" date="2000" name="Proc. Natl. Acad. Sci. U.S.A.">
        <title>Archaeal adaptation to higher temperatures revealed by genomic sequence of Thermoplasma volcanium.</title>
        <authorList>
            <person name="Kawashima T."/>
            <person name="Amano N."/>
            <person name="Koike H."/>
            <person name="Makino S."/>
            <person name="Higuchi S."/>
            <person name="Kawashima-Ohya Y."/>
            <person name="Watanabe K."/>
            <person name="Yamazaki M."/>
            <person name="Kanehori K."/>
            <person name="Kawamoto T."/>
            <person name="Nunoshiba T."/>
            <person name="Yamamoto Y."/>
            <person name="Aramaki H."/>
            <person name="Makino K."/>
            <person name="Suzuki M."/>
        </authorList>
    </citation>
    <scope>NUCLEOTIDE SEQUENCE [LARGE SCALE GENOMIC DNA]</scope>
    <source>
        <strain>ATCC 51530 / DSM 4299 / JCM 9571 / NBRC 15438 / GSS1</strain>
    </source>
</reference>
<organism>
    <name type="scientific">Thermoplasma volcanium (strain ATCC 51530 / DSM 4299 / JCM 9571 / NBRC 15438 / GSS1)</name>
    <dbReference type="NCBI Taxonomy" id="273116"/>
    <lineage>
        <taxon>Archaea</taxon>
        <taxon>Methanobacteriati</taxon>
        <taxon>Thermoplasmatota</taxon>
        <taxon>Thermoplasmata</taxon>
        <taxon>Thermoplasmatales</taxon>
        <taxon>Thermoplasmataceae</taxon>
        <taxon>Thermoplasma</taxon>
    </lineage>
</organism>
<comment type="function">
    <text evidence="1">Binds the lower part of the 30S subunit head.</text>
</comment>
<comment type="subunit">
    <text evidence="1">Part of the 30S ribosomal subunit.</text>
</comment>
<comment type="similarity">
    <text evidence="1">Belongs to the universal ribosomal protein uS3 family.</text>
</comment>
<protein>
    <recommendedName>
        <fullName evidence="1">Small ribosomal subunit protein uS3</fullName>
    </recommendedName>
    <alternativeName>
        <fullName evidence="3">30S ribosomal protein S3</fullName>
    </alternativeName>
</protein>
<feature type="chain" id="PRO_0000130265" description="Small ribosomal subunit protein uS3">
    <location>
        <begin position="1"/>
        <end position="225"/>
    </location>
</feature>
<feature type="domain" description="KH type-2" evidence="1">
    <location>
        <begin position="16"/>
        <end position="85"/>
    </location>
</feature>
<feature type="region of interest" description="Disordered" evidence="2">
    <location>
        <begin position="200"/>
        <end position="225"/>
    </location>
</feature>
<feature type="compositionally biased region" description="Basic and acidic residues" evidence="2">
    <location>
        <begin position="208"/>
        <end position="217"/>
    </location>
</feature>
<gene>
    <name evidence="1" type="primary">rps3</name>
    <name type="ordered locus">TV0334</name>
    <name type="ORF">TVG0336522</name>
</gene>
<keyword id="KW-0687">Ribonucleoprotein</keyword>
<keyword id="KW-0689">Ribosomal protein</keyword>
<keyword id="KW-0694">RNA-binding</keyword>
<keyword id="KW-0699">rRNA-binding</keyword>
<evidence type="ECO:0000255" key="1">
    <source>
        <dbReference type="HAMAP-Rule" id="MF_01309"/>
    </source>
</evidence>
<evidence type="ECO:0000256" key="2">
    <source>
        <dbReference type="SAM" id="MobiDB-lite"/>
    </source>
</evidence>
<evidence type="ECO:0000305" key="3"/>
<dbReference type="EMBL" id="BA000011">
    <property type="protein sequence ID" value="BAB59476.1"/>
    <property type="molecule type" value="Genomic_DNA"/>
</dbReference>
<dbReference type="RefSeq" id="WP_010916588.1">
    <property type="nucleotide sequence ID" value="NC_002689.2"/>
</dbReference>
<dbReference type="SMR" id="Q97BX1"/>
<dbReference type="STRING" id="273116.gene:9381111"/>
<dbReference type="PaxDb" id="273116-14324549"/>
<dbReference type="GeneID" id="1440846"/>
<dbReference type="KEGG" id="tvo:TVG0336522"/>
<dbReference type="eggNOG" id="arCOG04097">
    <property type="taxonomic scope" value="Archaea"/>
</dbReference>
<dbReference type="HOGENOM" id="CLU_058591_1_1_2"/>
<dbReference type="OrthoDB" id="9126at2157"/>
<dbReference type="PhylomeDB" id="Q97BX1"/>
<dbReference type="Proteomes" id="UP000001017">
    <property type="component" value="Chromosome"/>
</dbReference>
<dbReference type="GO" id="GO:0022627">
    <property type="term" value="C:cytosolic small ribosomal subunit"/>
    <property type="evidence" value="ECO:0007669"/>
    <property type="project" value="TreeGrafter"/>
</dbReference>
<dbReference type="GO" id="GO:0019843">
    <property type="term" value="F:rRNA binding"/>
    <property type="evidence" value="ECO:0007669"/>
    <property type="project" value="UniProtKB-UniRule"/>
</dbReference>
<dbReference type="GO" id="GO:0003735">
    <property type="term" value="F:structural constituent of ribosome"/>
    <property type="evidence" value="ECO:0007669"/>
    <property type="project" value="InterPro"/>
</dbReference>
<dbReference type="GO" id="GO:0006412">
    <property type="term" value="P:translation"/>
    <property type="evidence" value="ECO:0007669"/>
    <property type="project" value="UniProtKB-UniRule"/>
</dbReference>
<dbReference type="CDD" id="cd02411">
    <property type="entry name" value="KH-II_30S_S3_arch"/>
    <property type="match status" value="1"/>
</dbReference>
<dbReference type="FunFam" id="3.30.300.20:FF:000001">
    <property type="entry name" value="30S ribosomal protein S3"/>
    <property type="match status" value="1"/>
</dbReference>
<dbReference type="Gene3D" id="3.30.300.20">
    <property type="match status" value="1"/>
</dbReference>
<dbReference type="Gene3D" id="3.30.1140.32">
    <property type="entry name" value="Ribosomal protein S3, C-terminal domain"/>
    <property type="match status" value="1"/>
</dbReference>
<dbReference type="HAMAP" id="MF_01309_A">
    <property type="entry name" value="Ribosomal_uS3_A"/>
    <property type="match status" value="1"/>
</dbReference>
<dbReference type="InterPro" id="IPR004087">
    <property type="entry name" value="KH_dom"/>
</dbReference>
<dbReference type="InterPro" id="IPR015946">
    <property type="entry name" value="KH_dom-like_a/b"/>
</dbReference>
<dbReference type="InterPro" id="IPR004044">
    <property type="entry name" value="KH_dom_type_2"/>
</dbReference>
<dbReference type="InterPro" id="IPR009019">
    <property type="entry name" value="KH_sf_prok-type"/>
</dbReference>
<dbReference type="InterPro" id="IPR036419">
    <property type="entry name" value="Ribosomal_S3_C_sf"/>
</dbReference>
<dbReference type="InterPro" id="IPR027488">
    <property type="entry name" value="Ribosomal_uS3_arc"/>
</dbReference>
<dbReference type="InterPro" id="IPR001351">
    <property type="entry name" value="Ribosomal_uS3_C"/>
</dbReference>
<dbReference type="InterPro" id="IPR005703">
    <property type="entry name" value="Ribosomal_uS3_euk/arc"/>
</dbReference>
<dbReference type="NCBIfam" id="NF003219">
    <property type="entry name" value="PRK04191.1"/>
    <property type="match status" value="1"/>
</dbReference>
<dbReference type="NCBIfam" id="TIGR01008">
    <property type="entry name" value="uS3_euk_arch"/>
    <property type="match status" value="1"/>
</dbReference>
<dbReference type="PANTHER" id="PTHR11760">
    <property type="entry name" value="30S/40S RIBOSOMAL PROTEIN S3"/>
    <property type="match status" value="1"/>
</dbReference>
<dbReference type="PANTHER" id="PTHR11760:SF32">
    <property type="entry name" value="SMALL RIBOSOMAL SUBUNIT PROTEIN US3"/>
    <property type="match status" value="1"/>
</dbReference>
<dbReference type="Pfam" id="PF07650">
    <property type="entry name" value="KH_2"/>
    <property type="match status" value="1"/>
</dbReference>
<dbReference type="Pfam" id="PF00189">
    <property type="entry name" value="Ribosomal_S3_C"/>
    <property type="match status" value="1"/>
</dbReference>
<dbReference type="SMART" id="SM00322">
    <property type="entry name" value="KH"/>
    <property type="match status" value="1"/>
</dbReference>
<dbReference type="SUPFAM" id="SSF54814">
    <property type="entry name" value="Prokaryotic type KH domain (KH-domain type II)"/>
    <property type="match status" value="1"/>
</dbReference>
<dbReference type="SUPFAM" id="SSF54821">
    <property type="entry name" value="Ribosomal protein S3 C-terminal domain"/>
    <property type="match status" value="1"/>
</dbReference>
<dbReference type="PROSITE" id="PS50823">
    <property type="entry name" value="KH_TYPE_2"/>
    <property type="match status" value="1"/>
</dbReference>